<proteinExistence type="inferred from homology"/>
<organism>
    <name type="scientific">Bradyrhizobium sp. (strain BTAi1 / ATCC BAA-1182)</name>
    <dbReference type="NCBI Taxonomy" id="288000"/>
    <lineage>
        <taxon>Bacteria</taxon>
        <taxon>Pseudomonadati</taxon>
        <taxon>Pseudomonadota</taxon>
        <taxon>Alphaproteobacteria</taxon>
        <taxon>Hyphomicrobiales</taxon>
        <taxon>Nitrobacteraceae</taxon>
        <taxon>Bradyrhizobium</taxon>
    </lineage>
</organism>
<feature type="chain" id="PRO_1000149141" description="2-isopropylmalate synthase">
    <location>
        <begin position="1"/>
        <end position="523"/>
    </location>
</feature>
<feature type="domain" description="Pyruvate carboxyltransferase" evidence="1">
    <location>
        <begin position="12"/>
        <end position="274"/>
    </location>
</feature>
<feature type="region of interest" description="Regulatory domain" evidence="1">
    <location>
        <begin position="398"/>
        <end position="523"/>
    </location>
</feature>
<feature type="binding site" evidence="1">
    <location>
        <position position="21"/>
    </location>
    <ligand>
        <name>Mn(2+)</name>
        <dbReference type="ChEBI" id="CHEBI:29035"/>
    </ligand>
</feature>
<feature type="binding site" evidence="1">
    <location>
        <position position="209"/>
    </location>
    <ligand>
        <name>Mn(2+)</name>
        <dbReference type="ChEBI" id="CHEBI:29035"/>
    </ligand>
</feature>
<feature type="binding site" evidence="1">
    <location>
        <position position="211"/>
    </location>
    <ligand>
        <name>Mn(2+)</name>
        <dbReference type="ChEBI" id="CHEBI:29035"/>
    </ligand>
</feature>
<feature type="binding site" evidence="1">
    <location>
        <position position="245"/>
    </location>
    <ligand>
        <name>Mn(2+)</name>
        <dbReference type="ChEBI" id="CHEBI:29035"/>
    </ligand>
</feature>
<protein>
    <recommendedName>
        <fullName evidence="1">2-isopropylmalate synthase</fullName>
        <ecNumber evidence="1">2.3.3.13</ecNumber>
    </recommendedName>
    <alternativeName>
        <fullName evidence="1">Alpha-IPM synthase</fullName>
    </alternativeName>
    <alternativeName>
        <fullName evidence="1">Alpha-isopropylmalate synthase</fullName>
    </alternativeName>
</protein>
<keyword id="KW-0028">Amino-acid biosynthesis</keyword>
<keyword id="KW-0100">Branched-chain amino acid biosynthesis</keyword>
<keyword id="KW-0963">Cytoplasm</keyword>
<keyword id="KW-0432">Leucine biosynthesis</keyword>
<keyword id="KW-0464">Manganese</keyword>
<keyword id="KW-0479">Metal-binding</keyword>
<keyword id="KW-1185">Reference proteome</keyword>
<keyword id="KW-0808">Transferase</keyword>
<comment type="function">
    <text evidence="1">Catalyzes the condensation of the acetyl group of acetyl-CoA with 3-methyl-2-oxobutanoate (2-ketoisovalerate) to form 3-carboxy-3-hydroxy-4-methylpentanoate (2-isopropylmalate).</text>
</comment>
<comment type="catalytic activity">
    <reaction evidence="1">
        <text>3-methyl-2-oxobutanoate + acetyl-CoA + H2O = (2S)-2-isopropylmalate + CoA + H(+)</text>
        <dbReference type="Rhea" id="RHEA:21524"/>
        <dbReference type="ChEBI" id="CHEBI:1178"/>
        <dbReference type="ChEBI" id="CHEBI:11851"/>
        <dbReference type="ChEBI" id="CHEBI:15377"/>
        <dbReference type="ChEBI" id="CHEBI:15378"/>
        <dbReference type="ChEBI" id="CHEBI:57287"/>
        <dbReference type="ChEBI" id="CHEBI:57288"/>
        <dbReference type="EC" id="2.3.3.13"/>
    </reaction>
</comment>
<comment type="cofactor">
    <cofactor evidence="1">
        <name>Mn(2+)</name>
        <dbReference type="ChEBI" id="CHEBI:29035"/>
    </cofactor>
</comment>
<comment type="pathway">
    <text evidence="1">Amino-acid biosynthesis; L-leucine biosynthesis; L-leucine from 3-methyl-2-oxobutanoate: step 1/4.</text>
</comment>
<comment type="subunit">
    <text evidence="1">Homodimer.</text>
</comment>
<comment type="subcellular location">
    <subcellularLocation>
        <location evidence="1">Cytoplasm</location>
    </subcellularLocation>
</comment>
<comment type="similarity">
    <text evidence="1">Belongs to the alpha-IPM synthase/homocitrate synthase family. LeuA type 1 subfamily.</text>
</comment>
<gene>
    <name evidence="1" type="primary">leuA</name>
    <name type="ordered locus">BBta_6044</name>
</gene>
<reference key="1">
    <citation type="journal article" date="2007" name="Science">
        <title>Legumes symbioses: absence of nod genes in photosynthetic bradyrhizobia.</title>
        <authorList>
            <person name="Giraud E."/>
            <person name="Moulin L."/>
            <person name="Vallenet D."/>
            <person name="Barbe V."/>
            <person name="Cytryn E."/>
            <person name="Avarre J.-C."/>
            <person name="Jaubert M."/>
            <person name="Simon D."/>
            <person name="Cartieaux F."/>
            <person name="Prin Y."/>
            <person name="Bena G."/>
            <person name="Hannibal L."/>
            <person name="Fardoux J."/>
            <person name="Kojadinovic M."/>
            <person name="Vuillet L."/>
            <person name="Lajus A."/>
            <person name="Cruveiller S."/>
            <person name="Rouy Z."/>
            <person name="Mangenot S."/>
            <person name="Segurens B."/>
            <person name="Dossat C."/>
            <person name="Franck W.L."/>
            <person name="Chang W.-S."/>
            <person name="Saunders E."/>
            <person name="Bruce D."/>
            <person name="Richardson P."/>
            <person name="Normand P."/>
            <person name="Dreyfus B."/>
            <person name="Pignol D."/>
            <person name="Stacey G."/>
            <person name="Emerich D."/>
            <person name="Vermeglio A."/>
            <person name="Medigue C."/>
            <person name="Sadowsky M."/>
        </authorList>
    </citation>
    <scope>NUCLEOTIDE SEQUENCE [LARGE SCALE GENOMIC DNA]</scope>
    <source>
        <strain>BTAi1 / ATCC BAA-1182</strain>
    </source>
</reference>
<sequence>MSSTTPSDKDRVVIFDTTLRDGEQCPGATMTFEEKLNIAAMLDGMGVDVIEAGFPIASDGDFEAVNEIAKRTQNAVVCGLSRAGAKDIDRCAEAIRPAKRGRIHTFLSTSPVHMKYKLQMEPQAVFELVVSSVTRARNHTDDVEWSSEDGTRTEFDFLCRCVEAAIKAGATTINIPDTVGYAVPEEYYDLFKRVRETVPNSDKAVFSVHCHNDLGMAVANSMAGIRAGARQIECTINGIGERAGNAALEEVVMAMRVRNDKLPFWNKIDTTQLTHASKVVSAATSFPVQYNKAIVGRNAFAHESGIHQDGMLKNAQTYEIMLPETVGVKQTSLVMGKHSGRHAFIHKLEEMGHKLAGNQVEDAFVRFKALADRKKHIYDEDIEALIDEGMVSAHDRIKLLSLSVIAGTRGPQRATMKLDVDGVTKIEESEGNGPVDAVFNCIKSLVPHEAKLELYQVHAVTEGTDAQAEVSVRLSQDGRSMTARAADPDTLVASAKAYLGALNKLVMKRQRDVAQGAAAAAAS</sequence>
<accession>A5EP79</accession>
<name>LEU1_BRASB</name>
<evidence type="ECO:0000255" key="1">
    <source>
        <dbReference type="HAMAP-Rule" id="MF_01025"/>
    </source>
</evidence>
<dbReference type="EC" id="2.3.3.13" evidence="1"/>
<dbReference type="EMBL" id="CP000494">
    <property type="protein sequence ID" value="ABQ37973.1"/>
    <property type="molecule type" value="Genomic_DNA"/>
</dbReference>
<dbReference type="RefSeq" id="WP_012045924.1">
    <property type="nucleotide sequence ID" value="NC_009485.1"/>
</dbReference>
<dbReference type="SMR" id="A5EP79"/>
<dbReference type="STRING" id="288000.BBta_6044"/>
<dbReference type="KEGG" id="bbt:BBta_6044"/>
<dbReference type="eggNOG" id="COG0119">
    <property type="taxonomic scope" value="Bacteria"/>
</dbReference>
<dbReference type="HOGENOM" id="CLU_022158_0_1_5"/>
<dbReference type="OrthoDB" id="9803573at2"/>
<dbReference type="UniPathway" id="UPA00048">
    <property type="reaction ID" value="UER00070"/>
</dbReference>
<dbReference type="Proteomes" id="UP000000246">
    <property type="component" value="Chromosome"/>
</dbReference>
<dbReference type="GO" id="GO:0005829">
    <property type="term" value="C:cytosol"/>
    <property type="evidence" value="ECO:0007669"/>
    <property type="project" value="TreeGrafter"/>
</dbReference>
<dbReference type="GO" id="GO:0003852">
    <property type="term" value="F:2-isopropylmalate synthase activity"/>
    <property type="evidence" value="ECO:0007669"/>
    <property type="project" value="UniProtKB-UniRule"/>
</dbReference>
<dbReference type="GO" id="GO:0003985">
    <property type="term" value="F:acetyl-CoA C-acetyltransferase activity"/>
    <property type="evidence" value="ECO:0007669"/>
    <property type="project" value="UniProtKB-UniRule"/>
</dbReference>
<dbReference type="GO" id="GO:0030145">
    <property type="term" value="F:manganese ion binding"/>
    <property type="evidence" value="ECO:0007669"/>
    <property type="project" value="UniProtKB-UniRule"/>
</dbReference>
<dbReference type="GO" id="GO:0009098">
    <property type="term" value="P:L-leucine biosynthetic process"/>
    <property type="evidence" value="ECO:0007669"/>
    <property type="project" value="UniProtKB-UniRule"/>
</dbReference>
<dbReference type="CDD" id="cd07940">
    <property type="entry name" value="DRE_TIM_IPMS"/>
    <property type="match status" value="1"/>
</dbReference>
<dbReference type="FunFam" id="1.10.238.260:FF:000001">
    <property type="entry name" value="2-isopropylmalate synthase"/>
    <property type="match status" value="1"/>
</dbReference>
<dbReference type="FunFam" id="3.20.20.70:FF:000010">
    <property type="entry name" value="2-isopropylmalate synthase"/>
    <property type="match status" value="1"/>
</dbReference>
<dbReference type="FunFam" id="3.30.160.270:FF:000003">
    <property type="entry name" value="2-isopropylmalate synthase"/>
    <property type="match status" value="1"/>
</dbReference>
<dbReference type="Gene3D" id="1.10.238.260">
    <property type="match status" value="1"/>
</dbReference>
<dbReference type="Gene3D" id="3.30.160.270">
    <property type="match status" value="1"/>
</dbReference>
<dbReference type="Gene3D" id="3.20.20.70">
    <property type="entry name" value="Aldolase class I"/>
    <property type="match status" value="1"/>
</dbReference>
<dbReference type="HAMAP" id="MF_01025">
    <property type="entry name" value="LeuA_type1"/>
    <property type="match status" value="1"/>
</dbReference>
<dbReference type="InterPro" id="IPR050073">
    <property type="entry name" value="2-IPM_HCS-like"/>
</dbReference>
<dbReference type="InterPro" id="IPR013709">
    <property type="entry name" value="2-isopropylmalate_synth_dimer"/>
</dbReference>
<dbReference type="InterPro" id="IPR002034">
    <property type="entry name" value="AIPM/Hcit_synth_CS"/>
</dbReference>
<dbReference type="InterPro" id="IPR013785">
    <property type="entry name" value="Aldolase_TIM"/>
</dbReference>
<dbReference type="InterPro" id="IPR054691">
    <property type="entry name" value="LeuA/HCS_post-cat"/>
</dbReference>
<dbReference type="InterPro" id="IPR036230">
    <property type="entry name" value="LeuA_allosteric_dom_sf"/>
</dbReference>
<dbReference type="InterPro" id="IPR005671">
    <property type="entry name" value="LeuA_bact_synth"/>
</dbReference>
<dbReference type="InterPro" id="IPR000891">
    <property type="entry name" value="PYR_CT"/>
</dbReference>
<dbReference type="NCBIfam" id="TIGR00973">
    <property type="entry name" value="leuA_bact"/>
    <property type="match status" value="1"/>
</dbReference>
<dbReference type="NCBIfam" id="NF002086">
    <property type="entry name" value="PRK00915.1-3"/>
    <property type="match status" value="1"/>
</dbReference>
<dbReference type="NCBIfam" id="NF002087">
    <property type="entry name" value="PRK00915.1-4"/>
    <property type="match status" value="1"/>
</dbReference>
<dbReference type="PANTHER" id="PTHR10277:SF9">
    <property type="entry name" value="2-ISOPROPYLMALATE SYNTHASE 1, CHLOROPLASTIC-RELATED"/>
    <property type="match status" value="1"/>
</dbReference>
<dbReference type="PANTHER" id="PTHR10277">
    <property type="entry name" value="HOMOCITRATE SYNTHASE-RELATED"/>
    <property type="match status" value="1"/>
</dbReference>
<dbReference type="Pfam" id="PF22617">
    <property type="entry name" value="HCS_D2"/>
    <property type="match status" value="1"/>
</dbReference>
<dbReference type="Pfam" id="PF00682">
    <property type="entry name" value="HMGL-like"/>
    <property type="match status" value="1"/>
</dbReference>
<dbReference type="Pfam" id="PF08502">
    <property type="entry name" value="LeuA_dimer"/>
    <property type="match status" value="1"/>
</dbReference>
<dbReference type="SMART" id="SM00917">
    <property type="entry name" value="LeuA_dimer"/>
    <property type="match status" value="1"/>
</dbReference>
<dbReference type="SUPFAM" id="SSF110921">
    <property type="entry name" value="2-isopropylmalate synthase LeuA, allosteric (dimerisation) domain"/>
    <property type="match status" value="1"/>
</dbReference>
<dbReference type="SUPFAM" id="SSF51569">
    <property type="entry name" value="Aldolase"/>
    <property type="match status" value="1"/>
</dbReference>
<dbReference type="PROSITE" id="PS00815">
    <property type="entry name" value="AIPM_HOMOCIT_SYNTH_1"/>
    <property type="match status" value="1"/>
</dbReference>
<dbReference type="PROSITE" id="PS00816">
    <property type="entry name" value="AIPM_HOMOCIT_SYNTH_2"/>
    <property type="match status" value="1"/>
</dbReference>
<dbReference type="PROSITE" id="PS50991">
    <property type="entry name" value="PYR_CT"/>
    <property type="match status" value="1"/>
</dbReference>